<feature type="chain" id="PRO_0000307653" description="Large ribosomal subunit protein uL1">
    <location>
        <begin position="1"/>
        <end position="220"/>
    </location>
</feature>
<organism>
    <name type="scientific">Ehrlichia ruminantium (strain Gardel)</name>
    <dbReference type="NCBI Taxonomy" id="302409"/>
    <lineage>
        <taxon>Bacteria</taxon>
        <taxon>Pseudomonadati</taxon>
        <taxon>Pseudomonadota</taxon>
        <taxon>Alphaproteobacteria</taxon>
        <taxon>Rickettsiales</taxon>
        <taxon>Anaplasmataceae</taxon>
        <taxon>Ehrlichia</taxon>
    </lineage>
</organism>
<gene>
    <name evidence="1" type="primary">rplA</name>
    <name type="ordered locus">ERGA_CDS_01620</name>
</gene>
<comment type="function">
    <text evidence="1">Binds directly to 23S rRNA. The L1 stalk is quite mobile in the ribosome, and is involved in E site tRNA release.</text>
</comment>
<comment type="function">
    <text evidence="1">Protein L1 is also a translational repressor protein, it controls the translation of the L11 operon by binding to its mRNA.</text>
</comment>
<comment type="subunit">
    <text evidence="1">Part of the 50S ribosomal subunit.</text>
</comment>
<comment type="similarity">
    <text evidence="1">Belongs to the universal ribosomal protein uL1 family.</text>
</comment>
<evidence type="ECO:0000255" key="1">
    <source>
        <dbReference type="HAMAP-Rule" id="MF_01318"/>
    </source>
</evidence>
<evidence type="ECO:0000305" key="2"/>
<sequence length="220" mass="23865">MSLLANDEVYDIVSGFKKVIESAKANFCESVDVAINLNINSSKSDEQVRGAVVLPKGLGREVKVAVFAKGGHLDAAKEAMADIVGDEELIEEIKRKKCKLDVDWCLTTPDFMSSVSSIAKILGPRGLMPNPKFNTVTFELSKAIKVIKSGQIRFKSDKAGIVHAKIGNVKFSIEDLLQNFNAVIGAIKQSKPASVKGVYFKDVFIVSTMGKSVKVESLNN</sequence>
<reference key="1">
    <citation type="journal article" date="2006" name="J. Bacteriol.">
        <title>Comparative genomic analysis of three strains of Ehrlichia ruminantium reveals an active process of genome size plasticity.</title>
        <authorList>
            <person name="Frutos R."/>
            <person name="Viari A."/>
            <person name="Ferraz C."/>
            <person name="Morgat A."/>
            <person name="Eychenie S."/>
            <person name="Kandassamy Y."/>
            <person name="Chantal I."/>
            <person name="Bensaid A."/>
            <person name="Coissac E."/>
            <person name="Vachiery N."/>
            <person name="Demaille J."/>
            <person name="Martinez D."/>
        </authorList>
    </citation>
    <scope>NUCLEOTIDE SEQUENCE [LARGE SCALE GENOMIC DNA]</scope>
    <source>
        <strain>Gardel</strain>
    </source>
</reference>
<proteinExistence type="inferred from homology"/>
<dbReference type="EMBL" id="CR925677">
    <property type="protein sequence ID" value="CAI27614.1"/>
    <property type="molecule type" value="Genomic_DNA"/>
</dbReference>
<dbReference type="RefSeq" id="WP_011154853.1">
    <property type="nucleotide sequence ID" value="NC_006831.1"/>
</dbReference>
<dbReference type="SMR" id="Q5FFE2"/>
<dbReference type="GeneID" id="33058330"/>
<dbReference type="KEGG" id="erg:ERGA_CDS_01620"/>
<dbReference type="HOGENOM" id="CLU_062853_0_0_5"/>
<dbReference type="OrthoDB" id="9803740at2"/>
<dbReference type="Proteomes" id="UP000000533">
    <property type="component" value="Chromosome"/>
</dbReference>
<dbReference type="GO" id="GO:0015934">
    <property type="term" value="C:large ribosomal subunit"/>
    <property type="evidence" value="ECO:0007669"/>
    <property type="project" value="InterPro"/>
</dbReference>
<dbReference type="GO" id="GO:0019843">
    <property type="term" value="F:rRNA binding"/>
    <property type="evidence" value="ECO:0007669"/>
    <property type="project" value="UniProtKB-UniRule"/>
</dbReference>
<dbReference type="GO" id="GO:0003735">
    <property type="term" value="F:structural constituent of ribosome"/>
    <property type="evidence" value="ECO:0007669"/>
    <property type="project" value="InterPro"/>
</dbReference>
<dbReference type="GO" id="GO:0000049">
    <property type="term" value="F:tRNA binding"/>
    <property type="evidence" value="ECO:0007669"/>
    <property type="project" value="UniProtKB-KW"/>
</dbReference>
<dbReference type="GO" id="GO:0006417">
    <property type="term" value="P:regulation of translation"/>
    <property type="evidence" value="ECO:0007669"/>
    <property type="project" value="UniProtKB-KW"/>
</dbReference>
<dbReference type="GO" id="GO:0006412">
    <property type="term" value="P:translation"/>
    <property type="evidence" value="ECO:0007669"/>
    <property type="project" value="UniProtKB-UniRule"/>
</dbReference>
<dbReference type="CDD" id="cd00403">
    <property type="entry name" value="Ribosomal_L1"/>
    <property type="match status" value="1"/>
</dbReference>
<dbReference type="FunFam" id="3.40.50.790:FF:000001">
    <property type="entry name" value="50S ribosomal protein L1"/>
    <property type="match status" value="1"/>
</dbReference>
<dbReference type="Gene3D" id="3.30.190.20">
    <property type="match status" value="1"/>
</dbReference>
<dbReference type="Gene3D" id="3.40.50.790">
    <property type="match status" value="1"/>
</dbReference>
<dbReference type="HAMAP" id="MF_01318_B">
    <property type="entry name" value="Ribosomal_uL1_B"/>
    <property type="match status" value="1"/>
</dbReference>
<dbReference type="InterPro" id="IPR005878">
    <property type="entry name" value="Ribosom_uL1_bac-type"/>
</dbReference>
<dbReference type="InterPro" id="IPR002143">
    <property type="entry name" value="Ribosomal_uL1"/>
</dbReference>
<dbReference type="InterPro" id="IPR023674">
    <property type="entry name" value="Ribosomal_uL1-like"/>
</dbReference>
<dbReference type="InterPro" id="IPR028364">
    <property type="entry name" value="Ribosomal_uL1/biogenesis"/>
</dbReference>
<dbReference type="InterPro" id="IPR016095">
    <property type="entry name" value="Ribosomal_uL1_3-a/b-sand"/>
</dbReference>
<dbReference type="InterPro" id="IPR023673">
    <property type="entry name" value="Ribosomal_uL1_CS"/>
</dbReference>
<dbReference type="NCBIfam" id="TIGR01169">
    <property type="entry name" value="rplA_bact"/>
    <property type="match status" value="1"/>
</dbReference>
<dbReference type="PANTHER" id="PTHR36427">
    <property type="entry name" value="54S RIBOSOMAL PROTEIN L1, MITOCHONDRIAL"/>
    <property type="match status" value="1"/>
</dbReference>
<dbReference type="PANTHER" id="PTHR36427:SF3">
    <property type="entry name" value="LARGE RIBOSOMAL SUBUNIT PROTEIN UL1M"/>
    <property type="match status" value="1"/>
</dbReference>
<dbReference type="Pfam" id="PF00687">
    <property type="entry name" value="Ribosomal_L1"/>
    <property type="match status" value="1"/>
</dbReference>
<dbReference type="PIRSF" id="PIRSF002155">
    <property type="entry name" value="Ribosomal_L1"/>
    <property type="match status" value="1"/>
</dbReference>
<dbReference type="SUPFAM" id="SSF56808">
    <property type="entry name" value="Ribosomal protein L1"/>
    <property type="match status" value="1"/>
</dbReference>
<dbReference type="PROSITE" id="PS01199">
    <property type="entry name" value="RIBOSOMAL_L1"/>
    <property type="match status" value="1"/>
</dbReference>
<name>RL1_EHRRG</name>
<protein>
    <recommendedName>
        <fullName evidence="1">Large ribosomal subunit protein uL1</fullName>
    </recommendedName>
    <alternativeName>
        <fullName evidence="2">50S ribosomal protein L1</fullName>
    </alternativeName>
</protein>
<keyword id="KW-0678">Repressor</keyword>
<keyword id="KW-0687">Ribonucleoprotein</keyword>
<keyword id="KW-0689">Ribosomal protein</keyword>
<keyword id="KW-0694">RNA-binding</keyword>
<keyword id="KW-0699">rRNA-binding</keyword>
<keyword id="KW-0810">Translation regulation</keyword>
<keyword id="KW-0820">tRNA-binding</keyword>
<accession>Q5FFE2</accession>